<evidence type="ECO:0000255" key="1">
    <source>
        <dbReference type="HAMAP-Rule" id="MF_01208"/>
    </source>
</evidence>
<gene>
    <name evidence="1" type="primary">pyrE</name>
    <name type="ordered locus">SAR1181</name>
</gene>
<reference key="1">
    <citation type="journal article" date="2004" name="Proc. Natl. Acad. Sci. U.S.A.">
        <title>Complete genomes of two clinical Staphylococcus aureus strains: evidence for the rapid evolution of virulence and drug resistance.</title>
        <authorList>
            <person name="Holden M.T.G."/>
            <person name="Feil E.J."/>
            <person name="Lindsay J.A."/>
            <person name="Peacock S.J."/>
            <person name="Day N.P.J."/>
            <person name="Enright M.C."/>
            <person name="Foster T.J."/>
            <person name="Moore C.E."/>
            <person name="Hurst L."/>
            <person name="Atkin R."/>
            <person name="Barron A."/>
            <person name="Bason N."/>
            <person name="Bentley S.D."/>
            <person name="Chillingworth C."/>
            <person name="Chillingworth T."/>
            <person name="Churcher C."/>
            <person name="Clark L."/>
            <person name="Corton C."/>
            <person name="Cronin A."/>
            <person name="Doggett J."/>
            <person name="Dowd L."/>
            <person name="Feltwell T."/>
            <person name="Hance Z."/>
            <person name="Harris B."/>
            <person name="Hauser H."/>
            <person name="Holroyd S."/>
            <person name="Jagels K."/>
            <person name="James K.D."/>
            <person name="Lennard N."/>
            <person name="Line A."/>
            <person name="Mayes R."/>
            <person name="Moule S."/>
            <person name="Mungall K."/>
            <person name="Ormond D."/>
            <person name="Quail M.A."/>
            <person name="Rabbinowitsch E."/>
            <person name="Rutherford K.M."/>
            <person name="Sanders M."/>
            <person name="Sharp S."/>
            <person name="Simmonds M."/>
            <person name="Stevens K."/>
            <person name="Whitehead S."/>
            <person name="Barrell B.G."/>
            <person name="Spratt B.G."/>
            <person name="Parkhill J."/>
        </authorList>
    </citation>
    <scope>NUCLEOTIDE SEQUENCE [LARGE SCALE GENOMIC DNA]</scope>
    <source>
        <strain>MRSA252</strain>
    </source>
</reference>
<name>PYRE_STAAR</name>
<sequence>MAKEIAKSLLDIEAVTLSPNDLYTWSSGIKSPIYCDNRVTLGYPLVRGAIRDGLINLIKEHFPEVEVISGTATAGIPHAAFIAEKLKLPMNYVRSSNKSHGKQNQIEGAKSEGKKVVVIEDLISTGGSSVTAVEALKQAGAEVLGVVAIFTYGLKKADDTFSNIQLPFYTLSDYNELIEVAENEGKISSEDIQTLVEWRDNLA</sequence>
<comment type="function">
    <text evidence="1">Catalyzes the transfer of a ribosyl phosphate group from 5-phosphoribose 1-diphosphate to orotate, leading to the formation of orotidine monophosphate (OMP).</text>
</comment>
<comment type="catalytic activity">
    <reaction evidence="1">
        <text>orotidine 5'-phosphate + diphosphate = orotate + 5-phospho-alpha-D-ribose 1-diphosphate</text>
        <dbReference type="Rhea" id="RHEA:10380"/>
        <dbReference type="ChEBI" id="CHEBI:30839"/>
        <dbReference type="ChEBI" id="CHEBI:33019"/>
        <dbReference type="ChEBI" id="CHEBI:57538"/>
        <dbReference type="ChEBI" id="CHEBI:58017"/>
        <dbReference type="EC" id="2.4.2.10"/>
    </reaction>
</comment>
<comment type="cofactor">
    <cofactor evidence="1">
        <name>Mg(2+)</name>
        <dbReference type="ChEBI" id="CHEBI:18420"/>
    </cofactor>
</comment>
<comment type="pathway">
    <text evidence="1">Pyrimidine metabolism; UMP biosynthesis via de novo pathway; UMP from orotate: step 1/2.</text>
</comment>
<comment type="subunit">
    <text evidence="1">Homodimer.</text>
</comment>
<comment type="similarity">
    <text evidence="1">Belongs to the purine/pyrimidine phosphoribosyltransferase family. PyrE subfamily.</text>
</comment>
<feature type="chain" id="PRO_0000110739" description="Orotate phosphoribosyltransferase">
    <location>
        <begin position="1"/>
        <end position="203"/>
    </location>
</feature>
<feature type="binding site" evidence="1">
    <location>
        <position position="94"/>
    </location>
    <ligand>
        <name>5-phospho-alpha-D-ribose 1-diphosphate</name>
        <dbReference type="ChEBI" id="CHEBI:58017"/>
        <note>ligand shared between dimeric partners</note>
    </ligand>
</feature>
<feature type="binding site" evidence="1">
    <location>
        <position position="98"/>
    </location>
    <ligand>
        <name>5-phospho-alpha-D-ribose 1-diphosphate</name>
        <dbReference type="ChEBI" id="CHEBI:58017"/>
        <note>ligand shared between dimeric partners</note>
    </ligand>
</feature>
<feature type="binding site" evidence="1">
    <location>
        <position position="100"/>
    </location>
    <ligand>
        <name>5-phospho-alpha-D-ribose 1-diphosphate</name>
        <dbReference type="ChEBI" id="CHEBI:58017"/>
        <note>ligand shared between dimeric partners</note>
    </ligand>
</feature>
<feature type="binding site" description="in other chain" evidence="1">
    <location>
        <begin position="120"/>
        <end position="128"/>
    </location>
    <ligand>
        <name>5-phospho-alpha-D-ribose 1-diphosphate</name>
        <dbReference type="ChEBI" id="CHEBI:58017"/>
        <note>ligand shared between dimeric partners</note>
    </ligand>
</feature>
<feature type="binding site" evidence="1">
    <location>
        <position position="124"/>
    </location>
    <ligand>
        <name>orotate</name>
        <dbReference type="ChEBI" id="CHEBI:30839"/>
    </ligand>
</feature>
<accession>Q6GHN0</accession>
<protein>
    <recommendedName>
        <fullName evidence="1">Orotate phosphoribosyltransferase</fullName>
        <shortName evidence="1">OPRT</shortName>
        <shortName evidence="1">OPRTase</shortName>
        <ecNumber evidence="1">2.4.2.10</ecNumber>
    </recommendedName>
</protein>
<keyword id="KW-0328">Glycosyltransferase</keyword>
<keyword id="KW-0460">Magnesium</keyword>
<keyword id="KW-0665">Pyrimidine biosynthesis</keyword>
<keyword id="KW-0808">Transferase</keyword>
<organism>
    <name type="scientific">Staphylococcus aureus (strain MRSA252)</name>
    <dbReference type="NCBI Taxonomy" id="282458"/>
    <lineage>
        <taxon>Bacteria</taxon>
        <taxon>Bacillati</taxon>
        <taxon>Bacillota</taxon>
        <taxon>Bacilli</taxon>
        <taxon>Bacillales</taxon>
        <taxon>Staphylococcaceae</taxon>
        <taxon>Staphylococcus</taxon>
    </lineage>
</organism>
<dbReference type="EC" id="2.4.2.10" evidence="1"/>
<dbReference type="EMBL" id="BX571856">
    <property type="protein sequence ID" value="CAG40183.1"/>
    <property type="molecule type" value="Genomic_DNA"/>
</dbReference>
<dbReference type="RefSeq" id="WP_001040248.1">
    <property type="nucleotide sequence ID" value="NC_002952.2"/>
</dbReference>
<dbReference type="SMR" id="Q6GHN0"/>
<dbReference type="KEGG" id="sar:SAR1181"/>
<dbReference type="HOGENOM" id="CLU_074878_1_1_9"/>
<dbReference type="UniPathway" id="UPA00070">
    <property type="reaction ID" value="UER00119"/>
</dbReference>
<dbReference type="Proteomes" id="UP000000596">
    <property type="component" value="Chromosome"/>
</dbReference>
<dbReference type="GO" id="GO:0000287">
    <property type="term" value="F:magnesium ion binding"/>
    <property type="evidence" value="ECO:0007669"/>
    <property type="project" value="UniProtKB-UniRule"/>
</dbReference>
<dbReference type="GO" id="GO:0004588">
    <property type="term" value="F:orotate phosphoribosyltransferase activity"/>
    <property type="evidence" value="ECO:0007669"/>
    <property type="project" value="UniProtKB-UniRule"/>
</dbReference>
<dbReference type="GO" id="GO:0044205">
    <property type="term" value="P:'de novo' UMP biosynthetic process"/>
    <property type="evidence" value="ECO:0007669"/>
    <property type="project" value="UniProtKB-UniRule"/>
</dbReference>
<dbReference type="GO" id="GO:0019856">
    <property type="term" value="P:pyrimidine nucleobase biosynthetic process"/>
    <property type="evidence" value="ECO:0007669"/>
    <property type="project" value="TreeGrafter"/>
</dbReference>
<dbReference type="CDD" id="cd06223">
    <property type="entry name" value="PRTases_typeI"/>
    <property type="match status" value="1"/>
</dbReference>
<dbReference type="Gene3D" id="3.40.50.2020">
    <property type="match status" value="1"/>
</dbReference>
<dbReference type="HAMAP" id="MF_01208">
    <property type="entry name" value="PyrE"/>
    <property type="match status" value="1"/>
</dbReference>
<dbReference type="InterPro" id="IPR023031">
    <property type="entry name" value="OPRT"/>
</dbReference>
<dbReference type="InterPro" id="IPR004467">
    <property type="entry name" value="Or_phspho_trans_dom"/>
</dbReference>
<dbReference type="InterPro" id="IPR000836">
    <property type="entry name" value="PRibTrfase_dom"/>
</dbReference>
<dbReference type="InterPro" id="IPR029057">
    <property type="entry name" value="PRTase-like"/>
</dbReference>
<dbReference type="NCBIfam" id="TIGR00336">
    <property type="entry name" value="pyrE"/>
    <property type="match status" value="1"/>
</dbReference>
<dbReference type="PANTHER" id="PTHR19278">
    <property type="entry name" value="OROTATE PHOSPHORIBOSYLTRANSFERASE"/>
    <property type="match status" value="1"/>
</dbReference>
<dbReference type="PANTHER" id="PTHR19278:SF9">
    <property type="entry name" value="URIDINE 5'-MONOPHOSPHATE SYNTHASE"/>
    <property type="match status" value="1"/>
</dbReference>
<dbReference type="Pfam" id="PF00156">
    <property type="entry name" value="Pribosyltran"/>
    <property type="match status" value="1"/>
</dbReference>
<dbReference type="SUPFAM" id="SSF53271">
    <property type="entry name" value="PRTase-like"/>
    <property type="match status" value="1"/>
</dbReference>
<dbReference type="PROSITE" id="PS00103">
    <property type="entry name" value="PUR_PYR_PR_TRANSFER"/>
    <property type="match status" value="1"/>
</dbReference>
<proteinExistence type="inferred from homology"/>